<protein>
    <recommendedName>
        <fullName evidence="3">E3 ubiquitin-protein ligase NleG</fullName>
        <ecNumber evidence="1">2.3.2.27</ecNumber>
    </recommendedName>
</protein>
<comment type="function">
    <text evidence="1">Effector proteins function to alter host cell physiology and promote bacterial survival in host tissues. This protein is an E3 ubiquitin-protein ligase that probably interferes with the host's ubiquitination pathway and targets host proteins for proteasomal degradation. Can ubiquitinate ubiquitin, giving rise to polyubiquitin chains (in vitro) (PubMed:36511702). Does not complement an nleG8 deletion in C.rodentium (PubMed:36511702).</text>
</comment>
<comment type="catalytic activity">
    <reaction evidence="1">
        <text>S-ubiquitinyl-[E2 ubiquitin-conjugating enzyme]-L-cysteine + [acceptor protein]-L-lysine = [E2 ubiquitin-conjugating enzyme]-L-cysteine + N(6)-ubiquitinyl-[acceptor protein]-L-lysine.</text>
        <dbReference type="EC" id="2.3.2.27"/>
    </reaction>
</comment>
<comment type="subunit">
    <text evidence="1">Interacts with host GOPC (human protein).</text>
</comment>
<comment type="subcellular location">
    <subcellularLocation>
        <location evidence="4">Secreted</location>
    </subcellularLocation>
    <subcellularLocation>
        <location evidence="1">Host cytoplasm</location>
    </subcellularLocation>
    <text evidence="4">Secreted by a type 3 secretion system (T3SS) (Probable).</text>
</comment>
<comment type="domain">
    <text evidence="1">Interacts with PDZ domain of host GOPC via NleG8's C-terminal residues.</text>
</comment>
<comment type="PTM">
    <text evidence="1">Two sizes of protein are detected upon expression in C.rodentium; only the smaller protein is secreted.</text>
</comment>
<comment type="similarity">
    <text evidence="3">Belongs to the NleG E3 ligase family.</text>
</comment>
<accession>Q8XAN6</accession>
<accession>A0A0H3JIV3</accession>
<accession>A0A6M0JK84</accession>
<accession>Q7AEM3</accession>
<keyword id="KW-0002">3D-structure</keyword>
<keyword id="KW-1035">Host cytoplasm</keyword>
<keyword id="KW-1185">Reference proteome</keyword>
<keyword id="KW-0964">Secreted</keyword>
<keyword id="KW-0808">Transferase</keyword>
<keyword id="KW-0833">Ubl conjugation pathway</keyword>
<keyword id="KW-0843">Virulence</keyword>
<name>NLEG8_ECO57</name>
<evidence type="ECO:0000269" key="1">
    <source>
    </source>
</evidence>
<evidence type="ECO:0000303" key="2">
    <source>
    </source>
</evidence>
<evidence type="ECO:0000305" key="3"/>
<evidence type="ECO:0000305" key="4">
    <source>
    </source>
</evidence>
<evidence type="ECO:0000312" key="5">
    <source>
        <dbReference type="EMBL" id="BAB35247.1"/>
    </source>
</evidence>
<evidence type="ECO:0007744" key="6">
    <source>
        <dbReference type="PDB" id="6XNJ"/>
    </source>
</evidence>
<dbReference type="EC" id="2.3.2.27" evidence="1"/>
<dbReference type="EMBL" id="BA000007">
    <property type="protein sequence ID" value="BAB35247.1"/>
    <property type="molecule type" value="Genomic_DNA"/>
</dbReference>
<dbReference type="RefSeq" id="NP_309851.1">
    <property type="nucleotide sequence ID" value="NC_002695.1"/>
</dbReference>
<dbReference type="RefSeq" id="WP_001303944.1">
    <property type="nucleotide sequence ID" value="NZ_VOAI01000015.1"/>
</dbReference>
<dbReference type="PDB" id="6XNJ">
    <property type="method" value="X-ray"/>
    <property type="resolution" value="1.85 A"/>
    <property type="chains" value="B=206-215"/>
</dbReference>
<dbReference type="PDBsum" id="6XNJ"/>
<dbReference type="SMR" id="Q8XAN6"/>
<dbReference type="STRING" id="155864.Z6010"/>
<dbReference type="GeneID" id="912888"/>
<dbReference type="KEGG" id="ecs:ECs_1824"/>
<dbReference type="PATRIC" id="fig|386585.9.peg.1921"/>
<dbReference type="eggNOG" id="ENOG5033V35">
    <property type="taxonomic scope" value="Bacteria"/>
</dbReference>
<dbReference type="HOGENOM" id="CLU_087233_1_0_6"/>
<dbReference type="OMA" id="NPGDFPC"/>
<dbReference type="Proteomes" id="UP000000558">
    <property type="component" value="Chromosome"/>
</dbReference>
<dbReference type="GO" id="GO:0004842">
    <property type="term" value="F:ubiquitin-protein transferase activity"/>
    <property type="evidence" value="ECO:0007669"/>
    <property type="project" value="InterPro"/>
</dbReference>
<dbReference type="GO" id="GO:0044403">
    <property type="term" value="P:biological process involved in symbiotic interaction"/>
    <property type="evidence" value="ECO:0007669"/>
    <property type="project" value="InterPro"/>
</dbReference>
<dbReference type="Gene3D" id="3.30.40.80">
    <property type="entry name" value="Effector protein NleG"/>
    <property type="match status" value="1"/>
</dbReference>
<dbReference type="InterPro" id="IPR010489">
    <property type="entry name" value="Effector_NleG"/>
</dbReference>
<dbReference type="InterPro" id="IPR038436">
    <property type="entry name" value="Effector_NleG_sf"/>
</dbReference>
<dbReference type="Pfam" id="PF06416">
    <property type="entry name" value="T3SS_NleG"/>
    <property type="match status" value="1"/>
</dbReference>
<sequence length="215" mass="24582">MPVILNFSSERVLSESELEALRHVGRVSQSEQLVVRGRTMRLHHISFMDSFSVEPVSGGLLDRLSARGHRLLAENLEIQLNRGHTFLQAFRLYMEQSRATPCTRQNVSSAIQNKINSHAFTVSHQDFSCHEQHLNCPITLCIPETGVFVRNAKNSEICSLYDHNALTELIRRNAPHPLSREPFVPEMIVSKDECHFNLIEQYFCILATQNICTRI</sequence>
<feature type="chain" id="PRO_0000462552" description="E3 ubiquitin-protein ligase NleG">
    <location>
        <begin position="1"/>
        <end position="215"/>
    </location>
</feature>
<feature type="region of interest" description="RING/U-box domain" evidence="4">
    <location>
        <begin position="136"/>
        <end position="189"/>
    </location>
</feature>
<feature type="short sequence motif" description="PDZ-binding motif" evidence="4">
    <location>
        <begin position="213"/>
        <end position="215"/>
    </location>
</feature>
<feature type="mutagenesis site" description="Loss of ubiquitin ligase activity, increases interaction with host GOPC." evidence="1">
    <original>I</original>
    <variation>K</variation>
    <location>
        <position position="138"/>
    </location>
</feature>
<feature type="mutagenesis site" description="Has ubiquitin ligase activity. No longer interacts with host GOPC; when associated with K-138." evidence="1">
    <location>
        <begin position="212"/>
        <end position="215"/>
    </location>
</feature>
<reference evidence="5" key="1">
    <citation type="journal article" date="2001" name="DNA Res.">
        <title>Complete genome sequence of enterohemorrhagic Escherichia coli O157:H7 and genomic comparison with a laboratory strain K-12.</title>
        <authorList>
            <person name="Hayashi T."/>
            <person name="Makino K."/>
            <person name="Ohnishi M."/>
            <person name="Kurokawa K."/>
            <person name="Ishii K."/>
            <person name="Yokoyama K."/>
            <person name="Han C.-G."/>
            <person name="Ohtsubo E."/>
            <person name="Nakayama K."/>
            <person name="Murata T."/>
            <person name="Tanaka M."/>
            <person name="Tobe T."/>
            <person name="Iida T."/>
            <person name="Takami H."/>
            <person name="Honda T."/>
            <person name="Sasakawa C."/>
            <person name="Ogasawara N."/>
            <person name="Yasunaga T."/>
            <person name="Kuhara S."/>
            <person name="Shiba T."/>
            <person name="Hattori M."/>
            <person name="Shinagawa H."/>
        </authorList>
    </citation>
    <scope>NUCLEOTIDE SEQUENCE [LARGE SCALE GENOMIC DNA]</scope>
    <source>
        <strain>O157:H7 / Sakai / RIMD 0509952 / EHEC</strain>
    </source>
</reference>
<reference evidence="6" key="2">
    <citation type="journal article" date="2023" name="Infect. Immun.">
        <title>Distinct Molecular Features of NleG Type 3 Secreted Effectors Allow for Different Roles during Citrobacter rodentium Infection in Mice.</title>
        <authorList>
            <person name="Popov G."/>
            <person name="Fiebig-Comyn A."/>
            <person name="Syriste L."/>
            <person name="Little D.J."/>
            <person name="Skarina T."/>
            <person name="Stogios P.J."/>
            <person name="Birstonas S."/>
            <person name="Coombes B.K."/>
            <person name="Savchenko A."/>
        </authorList>
    </citation>
    <scope>X-RAY CRYSTALLOGRAPHY (1.85 ANGSTROMS) OF 206-215 IN COMPLEX WITH HUMAN GOPC</scope>
    <scope>FUNCTION</scope>
    <scope>SUBUNIT</scope>
    <scope>INTERACTION WITH HOST GOPC</scope>
    <scope>SUBCELLULAR LOCATION</scope>
    <scope>DOMAIN</scope>
    <scope>MOTIF</scope>
    <scope>MUTAGENESIS OF ILE-138 AND 212-CYS--ILE-215</scope>
</reference>
<reference key="3">
    <citation type="journal article" date="2023" name="Infect. Immun.">
        <authorList>
            <person name="Popov G."/>
            <person name="Fiebig-Comyn A."/>
            <person name="Syriste L."/>
            <person name="Little D.J."/>
            <person name="Skarina T."/>
            <person name="Stogios P.J."/>
            <person name="Birstonas S."/>
            <person name="Coombes B.K."/>
            <person name="Savchenko A."/>
        </authorList>
    </citation>
    <scope>ERRATUM OF PUBMED:36511702</scope>
</reference>
<organism>
    <name type="scientific">Escherichia coli O157:H7</name>
    <dbReference type="NCBI Taxonomy" id="83334"/>
    <lineage>
        <taxon>Bacteria</taxon>
        <taxon>Pseudomonadati</taxon>
        <taxon>Pseudomonadota</taxon>
        <taxon>Gammaproteobacteria</taxon>
        <taxon>Enterobacterales</taxon>
        <taxon>Enterobacteriaceae</taxon>
        <taxon>Escherichia</taxon>
    </lineage>
</organism>
<gene>
    <name evidence="2" type="primary">nleG8</name>
    <name evidence="5" type="synonym">nleG</name>
    <name evidence="5" type="ORF">ECs_1824</name>
</gene>
<proteinExistence type="evidence at protein level"/>